<protein>
    <recommendedName>
        <fullName evidence="1">Small ribosomal subunit protein uS3</fullName>
    </recommendedName>
    <alternativeName>
        <fullName evidence="2">30S ribosomal protein S3</fullName>
    </alternativeName>
</protein>
<proteinExistence type="inferred from homology"/>
<gene>
    <name evidence="1" type="primary">rpsC</name>
    <name type="ordered locus">Dred_0221</name>
</gene>
<comment type="function">
    <text evidence="1">Binds the lower part of the 30S subunit head. Binds mRNA in the 70S ribosome, positioning it for translation.</text>
</comment>
<comment type="subunit">
    <text evidence="1">Part of the 30S ribosomal subunit. Forms a tight complex with proteins S10 and S14.</text>
</comment>
<comment type="similarity">
    <text evidence="1">Belongs to the universal ribosomal protein uS3 family.</text>
</comment>
<reference key="1">
    <citation type="submission" date="2007-03" db="EMBL/GenBank/DDBJ databases">
        <title>Complete sequence of Desulfotomaculum reducens MI-1.</title>
        <authorList>
            <consortium name="US DOE Joint Genome Institute"/>
            <person name="Copeland A."/>
            <person name="Lucas S."/>
            <person name="Lapidus A."/>
            <person name="Barry K."/>
            <person name="Detter J.C."/>
            <person name="Glavina del Rio T."/>
            <person name="Hammon N."/>
            <person name="Israni S."/>
            <person name="Dalin E."/>
            <person name="Tice H."/>
            <person name="Pitluck S."/>
            <person name="Sims D."/>
            <person name="Brettin T."/>
            <person name="Bruce D."/>
            <person name="Han C."/>
            <person name="Tapia R."/>
            <person name="Schmutz J."/>
            <person name="Larimer F."/>
            <person name="Land M."/>
            <person name="Hauser L."/>
            <person name="Kyrpides N."/>
            <person name="Kim E."/>
            <person name="Tebo B.M."/>
            <person name="Richardson P."/>
        </authorList>
    </citation>
    <scope>NUCLEOTIDE SEQUENCE [LARGE SCALE GENOMIC DNA]</scope>
    <source>
        <strain>ATCC BAA-1160 / DSM 100696 / MI-1</strain>
    </source>
</reference>
<name>RS3_DESRM</name>
<feature type="chain" id="PRO_1000086114" description="Small ribosomal subunit protein uS3">
    <location>
        <begin position="1"/>
        <end position="221"/>
    </location>
</feature>
<feature type="domain" description="KH type-2" evidence="1">
    <location>
        <begin position="39"/>
        <end position="107"/>
    </location>
</feature>
<organism>
    <name type="scientific">Desulforamulus reducens (strain ATCC BAA-1160 / DSM 100696 / MI-1)</name>
    <name type="common">Desulfotomaculum reducens</name>
    <dbReference type="NCBI Taxonomy" id="349161"/>
    <lineage>
        <taxon>Bacteria</taxon>
        <taxon>Bacillati</taxon>
        <taxon>Bacillota</taxon>
        <taxon>Clostridia</taxon>
        <taxon>Eubacteriales</taxon>
        <taxon>Peptococcaceae</taxon>
        <taxon>Desulforamulus</taxon>
    </lineage>
</organism>
<evidence type="ECO:0000255" key="1">
    <source>
        <dbReference type="HAMAP-Rule" id="MF_01309"/>
    </source>
</evidence>
<evidence type="ECO:0000305" key="2"/>
<accession>A4J117</accession>
<sequence>MGQKVNPKGLRVGIIKDWEGKWFADKRNYSNLLIEDVKIREYIKRKLYQAGISRIQIERAANRVKVSIHTAKPGIVIGRGGAEVEALRKELEKMTAKQVHVNIVEVKTPEVDAQLVAENIASQLEKRIAFRRAMKQTVQRSLRMGAKGIKIACSGRLAGAEIARTEWYSEGKVPLHTLRADIDYGFAEANTTYGKIGVKVWIYKGEVLPEAKKPAAGQGGE</sequence>
<keyword id="KW-1185">Reference proteome</keyword>
<keyword id="KW-0687">Ribonucleoprotein</keyword>
<keyword id="KW-0689">Ribosomal protein</keyword>
<keyword id="KW-0694">RNA-binding</keyword>
<keyword id="KW-0699">rRNA-binding</keyword>
<dbReference type="EMBL" id="CP000612">
    <property type="protein sequence ID" value="ABO48770.1"/>
    <property type="molecule type" value="Genomic_DNA"/>
</dbReference>
<dbReference type="RefSeq" id="WP_011876610.1">
    <property type="nucleotide sequence ID" value="NC_009253.1"/>
</dbReference>
<dbReference type="SMR" id="A4J117"/>
<dbReference type="STRING" id="349161.Dred_0221"/>
<dbReference type="KEGG" id="drm:Dred_0221"/>
<dbReference type="eggNOG" id="COG0092">
    <property type="taxonomic scope" value="Bacteria"/>
</dbReference>
<dbReference type="HOGENOM" id="CLU_058591_0_2_9"/>
<dbReference type="OrthoDB" id="9806396at2"/>
<dbReference type="Proteomes" id="UP000001556">
    <property type="component" value="Chromosome"/>
</dbReference>
<dbReference type="GO" id="GO:0022627">
    <property type="term" value="C:cytosolic small ribosomal subunit"/>
    <property type="evidence" value="ECO:0007669"/>
    <property type="project" value="TreeGrafter"/>
</dbReference>
<dbReference type="GO" id="GO:0003729">
    <property type="term" value="F:mRNA binding"/>
    <property type="evidence" value="ECO:0007669"/>
    <property type="project" value="UniProtKB-UniRule"/>
</dbReference>
<dbReference type="GO" id="GO:0019843">
    <property type="term" value="F:rRNA binding"/>
    <property type="evidence" value="ECO:0007669"/>
    <property type="project" value="UniProtKB-UniRule"/>
</dbReference>
<dbReference type="GO" id="GO:0003735">
    <property type="term" value="F:structural constituent of ribosome"/>
    <property type="evidence" value="ECO:0007669"/>
    <property type="project" value="InterPro"/>
</dbReference>
<dbReference type="GO" id="GO:0006412">
    <property type="term" value="P:translation"/>
    <property type="evidence" value="ECO:0007669"/>
    <property type="project" value="UniProtKB-UniRule"/>
</dbReference>
<dbReference type="CDD" id="cd02412">
    <property type="entry name" value="KH-II_30S_S3"/>
    <property type="match status" value="1"/>
</dbReference>
<dbReference type="FunFam" id="3.30.1140.32:FF:000001">
    <property type="entry name" value="30S ribosomal protein S3"/>
    <property type="match status" value="1"/>
</dbReference>
<dbReference type="FunFam" id="3.30.300.20:FF:000001">
    <property type="entry name" value="30S ribosomal protein S3"/>
    <property type="match status" value="1"/>
</dbReference>
<dbReference type="Gene3D" id="3.30.300.20">
    <property type="match status" value="1"/>
</dbReference>
<dbReference type="Gene3D" id="3.30.1140.32">
    <property type="entry name" value="Ribosomal protein S3, C-terminal domain"/>
    <property type="match status" value="1"/>
</dbReference>
<dbReference type="HAMAP" id="MF_01309_B">
    <property type="entry name" value="Ribosomal_uS3_B"/>
    <property type="match status" value="1"/>
</dbReference>
<dbReference type="InterPro" id="IPR004087">
    <property type="entry name" value="KH_dom"/>
</dbReference>
<dbReference type="InterPro" id="IPR015946">
    <property type="entry name" value="KH_dom-like_a/b"/>
</dbReference>
<dbReference type="InterPro" id="IPR004044">
    <property type="entry name" value="KH_dom_type_2"/>
</dbReference>
<dbReference type="InterPro" id="IPR009019">
    <property type="entry name" value="KH_sf_prok-type"/>
</dbReference>
<dbReference type="InterPro" id="IPR036419">
    <property type="entry name" value="Ribosomal_S3_C_sf"/>
</dbReference>
<dbReference type="InterPro" id="IPR005704">
    <property type="entry name" value="Ribosomal_uS3_bac-typ"/>
</dbReference>
<dbReference type="InterPro" id="IPR001351">
    <property type="entry name" value="Ribosomal_uS3_C"/>
</dbReference>
<dbReference type="InterPro" id="IPR018280">
    <property type="entry name" value="Ribosomal_uS3_CS"/>
</dbReference>
<dbReference type="NCBIfam" id="TIGR01009">
    <property type="entry name" value="rpsC_bact"/>
    <property type="match status" value="1"/>
</dbReference>
<dbReference type="PANTHER" id="PTHR11760">
    <property type="entry name" value="30S/40S RIBOSOMAL PROTEIN S3"/>
    <property type="match status" value="1"/>
</dbReference>
<dbReference type="PANTHER" id="PTHR11760:SF19">
    <property type="entry name" value="SMALL RIBOSOMAL SUBUNIT PROTEIN US3C"/>
    <property type="match status" value="1"/>
</dbReference>
<dbReference type="Pfam" id="PF07650">
    <property type="entry name" value="KH_2"/>
    <property type="match status" value="1"/>
</dbReference>
<dbReference type="Pfam" id="PF00189">
    <property type="entry name" value="Ribosomal_S3_C"/>
    <property type="match status" value="1"/>
</dbReference>
<dbReference type="SMART" id="SM00322">
    <property type="entry name" value="KH"/>
    <property type="match status" value="1"/>
</dbReference>
<dbReference type="SUPFAM" id="SSF54814">
    <property type="entry name" value="Prokaryotic type KH domain (KH-domain type II)"/>
    <property type="match status" value="1"/>
</dbReference>
<dbReference type="SUPFAM" id="SSF54821">
    <property type="entry name" value="Ribosomal protein S3 C-terminal domain"/>
    <property type="match status" value="1"/>
</dbReference>
<dbReference type="PROSITE" id="PS50823">
    <property type="entry name" value="KH_TYPE_2"/>
    <property type="match status" value="1"/>
</dbReference>
<dbReference type="PROSITE" id="PS00548">
    <property type="entry name" value="RIBOSOMAL_S3"/>
    <property type="match status" value="1"/>
</dbReference>